<proteinExistence type="inferred from homology"/>
<organism>
    <name type="scientific">Escherichia coli O139:H28 (strain E24377A / ETEC)</name>
    <dbReference type="NCBI Taxonomy" id="331111"/>
    <lineage>
        <taxon>Bacteria</taxon>
        <taxon>Pseudomonadati</taxon>
        <taxon>Pseudomonadota</taxon>
        <taxon>Gammaproteobacteria</taxon>
        <taxon>Enterobacterales</taxon>
        <taxon>Enterobacteriaceae</taxon>
        <taxon>Escherichia</taxon>
    </lineage>
</organism>
<gene>
    <name evidence="1" type="primary">ulaG</name>
    <name type="ordered locus">EcE24377A_4752</name>
</gene>
<keyword id="KW-0963">Cytoplasm</keyword>
<keyword id="KW-0378">Hydrolase</keyword>
<keyword id="KW-1185">Reference proteome</keyword>
<protein>
    <recommendedName>
        <fullName evidence="1">Probable L-ascorbate-6-phosphate lactonase UlaG</fullName>
        <ecNumber evidence="1">3.1.1.-</ecNumber>
    </recommendedName>
    <alternativeName>
        <fullName evidence="1">L-ascorbate utilization protein G</fullName>
    </alternativeName>
</protein>
<name>ULAG_ECO24</name>
<accession>A7ZV63</accession>
<reference key="1">
    <citation type="journal article" date="2008" name="J. Bacteriol.">
        <title>The pangenome structure of Escherichia coli: comparative genomic analysis of E. coli commensal and pathogenic isolates.</title>
        <authorList>
            <person name="Rasko D.A."/>
            <person name="Rosovitz M.J."/>
            <person name="Myers G.S.A."/>
            <person name="Mongodin E.F."/>
            <person name="Fricke W.F."/>
            <person name="Gajer P."/>
            <person name="Crabtree J."/>
            <person name="Sebaihia M."/>
            <person name="Thomson N.R."/>
            <person name="Chaudhuri R."/>
            <person name="Henderson I.R."/>
            <person name="Sperandio V."/>
            <person name="Ravel J."/>
        </authorList>
    </citation>
    <scope>NUCLEOTIDE SEQUENCE [LARGE SCALE GENOMIC DNA]</scope>
    <source>
        <strain>E24377A / ETEC</strain>
    </source>
</reference>
<sequence>MSKVKSITRESWILSTFPEWGSWLNEEIEQEQVAPGTFAMWWLGCTGIWLKSEGGTNVCVDFWCGTGKQSHGNPLMKQGHQMQRMAGVKKLQPNLRTTPFVLDPFAIRQIDAVLATHDHNDHIDVNVAAAVMQNCADDVPFIGPKTCVDLWIGWGVPKERCIVVKPGDVVKVKDIEIHALDAFDRTALITLPADQKAAGVLPDGMDDRAVNYLFKTPGGSLYHSGDSHYSNYYAKHGNEHQIDVALGSYGENPRGITDKMTSADMLRMGEALNAKVVIPFHHDIWSNFQADPQEIRVLWEMKKDRLKYGFKPFIWQVGGKFTWPLDKDNFEYHYPRGFDDCFTIEPDLPFKSFL</sequence>
<evidence type="ECO:0000255" key="1">
    <source>
        <dbReference type="HAMAP-Rule" id="MF_01266"/>
    </source>
</evidence>
<comment type="function">
    <text evidence="1">Probably catalyzes the hydrolysis of L-ascorbate-6-P into 3-keto-L-gulonate-6-P. Is essential for L-ascorbate utilization under anaerobic conditions.</text>
</comment>
<comment type="catalytic activity">
    <reaction evidence="1">
        <text>L-ascorbate 6-phosphate + H2O = 3-dehydro-L-gulonate 6-phosphate</text>
        <dbReference type="Rhea" id="RHEA:28803"/>
        <dbReference type="ChEBI" id="CHEBI:15377"/>
        <dbReference type="ChEBI" id="CHEBI:58774"/>
        <dbReference type="ChEBI" id="CHEBI:61698"/>
    </reaction>
</comment>
<comment type="cofactor">
    <cofactor evidence="1">
        <name>a divalent metal cation</name>
        <dbReference type="ChEBI" id="CHEBI:60240"/>
    </cofactor>
</comment>
<comment type="pathway">
    <text evidence="1">Cofactor degradation; L-ascorbate degradation; D-xylulose 5-phosphate from L-ascorbate: step 1/4.</text>
</comment>
<comment type="subcellular location">
    <subcellularLocation>
        <location evidence="1">Cytoplasm</location>
    </subcellularLocation>
</comment>
<comment type="induction">
    <text evidence="1">Induced by L-ascorbate. Repressed by UlaR.</text>
</comment>
<comment type="similarity">
    <text evidence="1">Belongs to the UlaG family.</text>
</comment>
<dbReference type="EC" id="3.1.1.-" evidence="1"/>
<dbReference type="EMBL" id="CP000800">
    <property type="protein sequence ID" value="ABV17156.1"/>
    <property type="molecule type" value="Genomic_DNA"/>
</dbReference>
<dbReference type="RefSeq" id="WP_001295191.1">
    <property type="nucleotide sequence ID" value="NC_009801.1"/>
</dbReference>
<dbReference type="SMR" id="A7ZV63"/>
<dbReference type="GeneID" id="93777632"/>
<dbReference type="KEGG" id="ecw:EcE24377A_4752"/>
<dbReference type="HOGENOM" id="CLU_074775_0_0_6"/>
<dbReference type="UniPathway" id="UPA00263">
    <property type="reaction ID" value="UER00377"/>
</dbReference>
<dbReference type="Proteomes" id="UP000001122">
    <property type="component" value="Chromosome"/>
</dbReference>
<dbReference type="GO" id="GO:0005737">
    <property type="term" value="C:cytoplasm"/>
    <property type="evidence" value="ECO:0007669"/>
    <property type="project" value="UniProtKB-SubCell"/>
</dbReference>
<dbReference type="GO" id="GO:0035460">
    <property type="term" value="F:L-ascorbate 6-phosphate lactonase activity"/>
    <property type="evidence" value="ECO:0007669"/>
    <property type="project" value="InterPro"/>
</dbReference>
<dbReference type="GO" id="GO:0030145">
    <property type="term" value="F:manganese ion binding"/>
    <property type="evidence" value="ECO:0007669"/>
    <property type="project" value="InterPro"/>
</dbReference>
<dbReference type="GO" id="GO:0019854">
    <property type="term" value="P:L-ascorbic acid catabolic process"/>
    <property type="evidence" value="ECO:0007669"/>
    <property type="project" value="UniProtKB-UniRule"/>
</dbReference>
<dbReference type="CDD" id="cd16284">
    <property type="entry name" value="UlaG-like_MBL-fold"/>
    <property type="match status" value="1"/>
</dbReference>
<dbReference type="FunFam" id="3.60.15.10:FF:000004">
    <property type="entry name" value="Probable L-ascorbate-6-phosphate lactonase UlaG"/>
    <property type="match status" value="1"/>
</dbReference>
<dbReference type="Gene3D" id="3.60.15.10">
    <property type="entry name" value="Ribonuclease Z/Hydroxyacylglutathione hydrolase-like"/>
    <property type="match status" value="1"/>
</dbReference>
<dbReference type="HAMAP" id="MF_01266">
    <property type="entry name" value="UlaG"/>
    <property type="match status" value="1"/>
</dbReference>
<dbReference type="InterPro" id="IPR023951">
    <property type="entry name" value="L-ascorbate_6P_UlaG"/>
</dbReference>
<dbReference type="InterPro" id="IPR001279">
    <property type="entry name" value="Metallo-B-lactamas"/>
</dbReference>
<dbReference type="InterPro" id="IPR036866">
    <property type="entry name" value="RibonucZ/Hydroxyglut_hydro"/>
</dbReference>
<dbReference type="InterPro" id="IPR048021">
    <property type="entry name" value="UlaG-like_MBL-fold"/>
</dbReference>
<dbReference type="InterPro" id="IPR050114">
    <property type="entry name" value="UPF0173_UPF0282_UlaG_hydrolase"/>
</dbReference>
<dbReference type="NCBIfam" id="NF008688">
    <property type="entry name" value="PRK11709.1"/>
    <property type="match status" value="1"/>
</dbReference>
<dbReference type="PANTHER" id="PTHR43546:SF9">
    <property type="entry name" value="L-ASCORBATE-6-PHOSPHATE LACTONASE ULAG-RELATED"/>
    <property type="match status" value="1"/>
</dbReference>
<dbReference type="PANTHER" id="PTHR43546">
    <property type="entry name" value="UPF0173 METAL-DEPENDENT HYDROLASE MJ1163-RELATED"/>
    <property type="match status" value="1"/>
</dbReference>
<dbReference type="Pfam" id="PF12706">
    <property type="entry name" value="Lactamase_B_2"/>
    <property type="match status" value="1"/>
</dbReference>
<dbReference type="SUPFAM" id="SSF56281">
    <property type="entry name" value="Metallo-hydrolase/oxidoreductase"/>
    <property type="match status" value="1"/>
</dbReference>
<feature type="chain" id="PRO_1000067315" description="Probable L-ascorbate-6-phosphate lactonase UlaG">
    <location>
        <begin position="1"/>
        <end position="354"/>
    </location>
</feature>